<comment type="function">
    <text evidence="1">Catalyzes the interconversion of 2-phosphoglycerate and 3-phosphoglycerate.</text>
</comment>
<comment type="catalytic activity">
    <reaction evidence="1">
        <text>(2R)-2-phosphoglycerate = (2R)-3-phosphoglycerate</text>
        <dbReference type="Rhea" id="RHEA:15901"/>
        <dbReference type="ChEBI" id="CHEBI:58272"/>
        <dbReference type="ChEBI" id="CHEBI:58289"/>
        <dbReference type="EC" id="5.4.2.11"/>
    </reaction>
</comment>
<comment type="pathway">
    <text evidence="1">Carbohydrate degradation; glycolysis; pyruvate from D-glyceraldehyde 3-phosphate: step 3/5.</text>
</comment>
<comment type="subunit">
    <text evidence="1">Homodimer.</text>
</comment>
<comment type="similarity">
    <text evidence="1">Belongs to the phosphoglycerate mutase family. BPG-dependent PGAM subfamily.</text>
</comment>
<comment type="sequence caution" evidence="2">
    <conflict type="erroneous initiation">
        <sequence resource="EMBL-CDS" id="ABB09780"/>
    </conflict>
    <text>Extended N-terminus.</text>
</comment>
<gene>
    <name evidence="1" type="primary">gpmA</name>
    <name type="ordered locus">Bcep18194_A6186</name>
</gene>
<dbReference type="EC" id="5.4.2.11" evidence="1"/>
<dbReference type="EMBL" id="CP000151">
    <property type="protein sequence ID" value="ABB09780.1"/>
    <property type="status" value="ALT_INIT"/>
    <property type="molecule type" value="Genomic_DNA"/>
</dbReference>
<dbReference type="RefSeq" id="WP_041492964.1">
    <property type="nucleotide sequence ID" value="NC_007510.1"/>
</dbReference>
<dbReference type="SMR" id="Q39CN6"/>
<dbReference type="GeneID" id="45096067"/>
<dbReference type="KEGG" id="bur:Bcep18194_A6186"/>
<dbReference type="PATRIC" id="fig|482957.22.peg.3197"/>
<dbReference type="HOGENOM" id="CLU_033323_1_1_4"/>
<dbReference type="UniPathway" id="UPA00109">
    <property type="reaction ID" value="UER00186"/>
</dbReference>
<dbReference type="Proteomes" id="UP000002705">
    <property type="component" value="Chromosome 1"/>
</dbReference>
<dbReference type="GO" id="GO:0004619">
    <property type="term" value="F:phosphoglycerate mutase activity"/>
    <property type="evidence" value="ECO:0007669"/>
    <property type="project" value="UniProtKB-EC"/>
</dbReference>
<dbReference type="GO" id="GO:0006094">
    <property type="term" value="P:gluconeogenesis"/>
    <property type="evidence" value="ECO:0007669"/>
    <property type="project" value="UniProtKB-UniRule"/>
</dbReference>
<dbReference type="GO" id="GO:0006096">
    <property type="term" value="P:glycolytic process"/>
    <property type="evidence" value="ECO:0007669"/>
    <property type="project" value="UniProtKB-UniRule"/>
</dbReference>
<dbReference type="CDD" id="cd07067">
    <property type="entry name" value="HP_PGM_like"/>
    <property type="match status" value="1"/>
</dbReference>
<dbReference type="FunFam" id="3.40.50.1240:FF:000003">
    <property type="entry name" value="2,3-bisphosphoglycerate-dependent phosphoglycerate mutase"/>
    <property type="match status" value="1"/>
</dbReference>
<dbReference type="Gene3D" id="3.40.50.1240">
    <property type="entry name" value="Phosphoglycerate mutase-like"/>
    <property type="match status" value="1"/>
</dbReference>
<dbReference type="HAMAP" id="MF_01039">
    <property type="entry name" value="PGAM_GpmA"/>
    <property type="match status" value="1"/>
</dbReference>
<dbReference type="InterPro" id="IPR013078">
    <property type="entry name" value="His_Pase_superF_clade-1"/>
</dbReference>
<dbReference type="InterPro" id="IPR029033">
    <property type="entry name" value="His_PPase_superfam"/>
</dbReference>
<dbReference type="InterPro" id="IPR001345">
    <property type="entry name" value="PG/BPGM_mutase_AS"/>
</dbReference>
<dbReference type="InterPro" id="IPR005952">
    <property type="entry name" value="Phosphogly_mut1"/>
</dbReference>
<dbReference type="NCBIfam" id="TIGR01258">
    <property type="entry name" value="pgm_1"/>
    <property type="match status" value="1"/>
</dbReference>
<dbReference type="NCBIfam" id="NF010713">
    <property type="entry name" value="PRK14115.1"/>
    <property type="match status" value="1"/>
</dbReference>
<dbReference type="PANTHER" id="PTHR11931">
    <property type="entry name" value="PHOSPHOGLYCERATE MUTASE"/>
    <property type="match status" value="1"/>
</dbReference>
<dbReference type="Pfam" id="PF00300">
    <property type="entry name" value="His_Phos_1"/>
    <property type="match status" value="2"/>
</dbReference>
<dbReference type="PIRSF" id="PIRSF000709">
    <property type="entry name" value="6PFK_2-Ptase"/>
    <property type="match status" value="1"/>
</dbReference>
<dbReference type="SMART" id="SM00855">
    <property type="entry name" value="PGAM"/>
    <property type="match status" value="1"/>
</dbReference>
<dbReference type="SUPFAM" id="SSF53254">
    <property type="entry name" value="Phosphoglycerate mutase-like"/>
    <property type="match status" value="1"/>
</dbReference>
<dbReference type="PROSITE" id="PS00175">
    <property type="entry name" value="PG_MUTASE"/>
    <property type="match status" value="1"/>
</dbReference>
<evidence type="ECO:0000255" key="1">
    <source>
        <dbReference type="HAMAP-Rule" id="MF_01039"/>
    </source>
</evidence>
<evidence type="ECO:0000305" key="2"/>
<proteinExistence type="inferred from homology"/>
<name>GPMA_BURL3</name>
<keyword id="KW-0312">Gluconeogenesis</keyword>
<keyword id="KW-0324">Glycolysis</keyword>
<keyword id="KW-0413">Isomerase</keyword>
<accession>Q39CN6</accession>
<feature type="chain" id="PRO_0000229114" description="2,3-bisphosphoglycerate-dependent phosphoglycerate mutase">
    <location>
        <begin position="1"/>
        <end position="248"/>
    </location>
</feature>
<feature type="active site" description="Tele-phosphohistidine intermediate" evidence="1">
    <location>
        <position position="9"/>
    </location>
</feature>
<feature type="active site" description="Proton donor/acceptor" evidence="1">
    <location>
        <position position="87"/>
    </location>
</feature>
<feature type="binding site" evidence="1">
    <location>
        <begin position="8"/>
        <end position="15"/>
    </location>
    <ligand>
        <name>substrate</name>
    </ligand>
</feature>
<feature type="binding site" evidence="1">
    <location>
        <begin position="21"/>
        <end position="22"/>
    </location>
    <ligand>
        <name>substrate</name>
    </ligand>
</feature>
<feature type="binding site" evidence="1">
    <location>
        <position position="60"/>
    </location>
    <ligand>
        <name>substrate</name>
    </ligand>
</feature>
<feature type="binding site" evidence="1">
    <location>
        <begin position="87"/>
        <end position="90"/>
    </location>
    <ligand>
        <name>substrate</name>
    </ligand>
</feature>
<feature type="binding site" evidence="1">
    <location>
        <position position="98"/>
    </location>
    <ligand>
        <name>substrate</name>
    </ligand>
</feature>
<feature type="binding site" evidence="1">
    <location>
        <begin position="114"/>
        <end position="115"/>
    </location>
    <ligand>
        <name>substrate</name>
    </ligand>
</feature>
<feature type="binding site" evidence="1">
    <location>
        <begin position="183"/>
        <end position="184"/>
    </location>
    <ligand>
        <name>substrate</name>
    </ligand>
</feature>
<feature type="site" description="Transition state stabilizer" evidence="1">
    <location>
        <position position="182"/>
    </location>
</feature>
<protein>
    <recommendedName>
        <fullName evidence="1">2,3-bisphosphoglycerate-dependent phosphoglycerate mutase</fullName>
        <shortName evidence="1">BPG-dependent PGAM</shortName>
        <shortName evidence="1">PGAM</shortName>
        <shortName evidence="1">Phosphoglyceromutase</shortName>
        <shortName evidence="1">dPGM</shortName>
        <ecNumber evidence="1">5.4.2.11</ecNumber>
    </recommendedName>
</protein>
<organism>
    <name type="scientific">Burkholderia lata (strain ATCC 17760 / DSM 23089 / LMG 22485 / NCIMB 9086 / R18194 / 383)</name>
    <dbReference type="NCBI Taxonomy" id="482957"/>
    <lineage>
        <taxon>Bacteria</taxon>
        <taxon>Pseudomonadati</taxon>
        <taxon>Pseudomonadota</taxon>
        <taxon>Betaproteobacteria</taxon>
        <taxon>Burkholderiales</taxon>
        <taxon>Burkholderiaceae</taxon>
        <taxon>Burkholderia</taxon>
        <taxon>Burkholderia cepacia complex</taxon>
    </lineage>
</organism>
<reference key="1">
    <citation type="submission" date="2005-10" db="EMBL/GenBank/DDBJ databases">
        <title>Complete sequence of chromosome 1 of Burkholderia sp. 383.</title>
        <authorList>
            <consortium name="US DOE Joint Genome Institute"/>
            <person name="Copeland A."/>
            <person name="Lucas S."/>
            <person name="Lapidus A."/>
            <person name="Barry K."/>
            <person name="Detter J.C."/>
            <person name="Glavina T."/>
            <person name="Hammon N."/>
            <person name="Israni S."/>
            <person name="Pitluck S."/>
            <person name="Chain P."/>
            <person name="Malfatti S."/>
            <person name="Shin M."/>
            <person name="Vergez L."/>
            <person name="Schmutz J."/>
            <person name="Larimer F."/>
            <person name="Land M."/>
            <person name="Kyrpides N."/>
            <person name="Lykidis A."/>
            <person name="Richardson P."/>
        </authorList>
    </citation>
    <scope>NUCLEOTIDE SEQUENCE [LARGE SCALE GENOMIC DNA]</scope>
    <source>
        <strain>ATCC 17760 / DSM 23089 / LMG 22485 / NCIMB 9086 / R18194 / 383</strain>
    </source>
</reference>
<sequence>MYKLVLIRHGESTWNKENRFTGWVDVDLTEQGRNEAYQAGELLKEAGYTFDIAYTSVLKRAIRTLWHVQDKMDLMYLPVVHSWRLNERHYGALSGLNKAETAAKFGDDQVLVWRRSYDTPPPALEATDERAPFNDPRYAKVPREQLPLTECLKDTVARVLPLWNESIAPAVRAGKQVLIAAHGNSLRALIKYLDGISDSDIVGLNIPNGVPLVYELDENLKPIKHYYLGDQDAIAQAQAAVAKQGKAG</sequence>